<name>VPB_BP186</name>
<protein>
    <recommendedName>
        <fullName>Late control gene B protein</fullName>
    </recommendedName>
    <alternativeName>
        <fullName>GpB</fullName>
    </alternativeName>
</protein>
<organism>
    <name type="scientific">Escherichia phage 186</name>
    <name type="common">Bacteriophage 186</name>
    <dbReference type="NCBI Taxonomy" id="29252"/>
    <lineage>
        <taxon>Viruses</taxon>
        <taxon>Duplodnaviria</taxon>
        <taxon>Heunggongvirae</taxon>
        <taxon>Uroviricota</taxon>
        <taxon>Caudoviricetes</taxon>
        <taxon>Peduoviridae</taxon>
        <taxon>Eganvirus</taxon>
    </lineage>
</organism>
<gene>
    <name type="primary">B</name>
</gene>
<keyword id="KW-0426">Late protein</keyword>
<keyword id="KW-1185">Reference proteome</keyword>
<sequence length="72" mass="8280">MFHCPKCHHAAHARTSRYLTENTKERYHQCQNINCSCTFMTMETIERFIVTPGAIDPAPPHPTVGGQRPLWL</sequence>
<proteinExistence type="predicted"/>
<accession>P08711</accession>
<dbReference type="EMBL" id="U32222">
    <property type="protein sequence ID" value="AAC34173.1"/>
    <property type="molecule type" value="Genomic_DNA"/>
</dbReference>
<dbReference type="PIR" id="S09530">
    <property type="entry name" value="S09530"/>
</dbReference>
<dbReference type="RefSeq" id="NP_052276.1">
    <property type="nucleotide sequence ID" value="NC_001317.1"/>
</dbReference>
<dbReference type="SMR" id="P08711"/>
<dbReference type="GeneID" id="1262458"/>
<dbReference type="KEGG" id="vg:1262458"/>
<dbReference type="OrthoDB" id="20184at10239"/>
<dbReference type="Proteomes" id="UP000000369">
    <property type="component" value="Segment"/>
</dbReference>
<dbReference type="InterPro" id="IPR007684">
    <property type="entry name" value="Znf_Ogr/Delta"/>
</dbReference>
<dbReference type="NCBIfam" id="NF007241">
    <property type="entry name" value="PRK09678.1"/>
    <property type="match status" value="1"/>
</dbReference>
<dbReference type="Pfam" id="PF04606">
    <property type="entry name" value="Ogr_Delta"/>
    <property type="match status" value="1"/>
</dbReference>
<organismHost>
    <name type="scientific">Escherichia coli</name>
    <dbReference type="NCBI Taxonomy" id="562"/>
</organismHost>
<feature type="chain" id="PRO_0000165298" description="Late control gene B protein">
    <location>
        <begin position="1"/>
        <end position="72"/>
    </location>
</feature>
<reference key="1">
    <citation type="journal article" date="1986" name="J. Mol. Biol.">
        <title>Control of gene expression in the P2-related template coliphages. III. DNA sequence of the major control region of phage 186.</title>
        <authorList>
            <person name="Kalionis B."/>
            <person name="Dodd I.B."/>
            <person name="Egan J.B."/>
        </authorList>
    </citation>
    <scope>NUCLEOTIDE SEQUENCE [GENOMIC DNA]</scope>
    <source>
        <strain>186CITSP</strain>
    </source>
</reference>
<reference key="2">
    <citation type="journal article" date="1992" name="Mol. Microbiol.">
        <title>Control of gene expression in the temperate coliphage 186. X. The cI repressor directly represses transcription of the late control gene B.</title>
        <authorList>
            <person name="Dibbens J.A."/>
            <person name="Gregory S.L."/>
            <person name="Egan J.B."/>
        </authorList>
    </citation>
    <scope>NUCLEOTIDE SEQUENCE [GENOMIC DNA]</scope>
</reference>